<organism>
    <name type="scientific">Paraburkholderia xenovorans (strain LB400)</name>
    <dbReference type="NCBI Taxonomy" id="266265"/>
    <lineage>
        <taxon>Bacteria</taxon>
        <taxon>Pseudomonadati</taxon>
        <taxon>Pseudomonadota</taxon>
        <taxon>Betaproteobacteria</taxon>
        <taxon>Burkholderiales</taxon>
        <taxon>Burkholderiaceae</taxon>
        <taxon>Paraburkholderia</taxon>
    </lineage>
</organism>
<keyword id="KW-1185">Reference proteome</keyword>
<keyword id="KW-0687">Ribonucleoprotein</keyword>
<keyword id="KW-0689">Ribosomal protein</keyword>
<reference key="1">
    <citation type="journal article" date="2006" name="Proc. Natl. Acad. Sci. U.S.A.">
        <title>Burkholderia xenovorans LB400 harbors a multi-replicon, 9.73-Mbp genome shaped for versatility.</title>
        <authorList>
            <person name="Chain P.S.G."/>
            <person name="Denef V.J."/>
            <person name="Konstantinidis K.T."/>
            <person name="Vergez L.M."/>
            <person name="Agullo L."/>
            <person name="Reyes V.L."/>
            <person name="Hauser L."/>
            <person name="Cordova M."/>
            <person name="Gomez L."/>
            <person name="Gonzalez M."/>
            <person name="Land M."/>
            <person name="Lao V."/>
            <person name="Larimer F."/>
            <person name="LiPuma J.J."/>
            <person name="Mahenthiralingam E."/>
            <person name="Malfatti S.A."/>
            <person name="Marx C.J."/>
            <person name="Parnell J.J."/>
            <person name="Ramette A."/>
            <person name="Richardson P."/>
            <person name="Seeger M."/>
            <person name="Smith D."/>
            <person name="Spilker T."/>
            <person name="Sul W.J."/>
            <person name="Tsoi T.V."/>
            <person name="Ulrich L.E."/>
            <person name="Zhulin I.B."/>
            <person name="Tiedje J.M."/>
        </authorList>
    </citation>
    <scope>NUCLEOTIDE SEQUENCE [LARGE SCALE GENOMIC DNA]</scope>
    <source>
        <strain>LB400</strain>
    </source>
</reference>
<evidence type="ECO:0000255" key="1">
    <source>
        <dbReference type="HAMAP-Rule" id="MF_00402"/>
    </source>
</evidence>
<evidence type="ECO:0000305" key="2"/>
<protein>
    <recommendedName>
        <fullName evidence="1">Large ribosomal subunit protein bL19</fullName>
    </recommendedName>
    <alternativeName>
        <fullName evidence="2">50S ribosomal protein L19</fullName>
    </alternativeName>
</protein>
<gene>
    <name evidence="1" type="primary">rplS</name>
    <name type="ordered locus">Bxeno_A3400</name>
    <name type="ORF">Bxe_A1009</name>
</gene>
<dbReference type="EMBL" id="CP000270">
    <property type="protein sequence ID" value="ABE31938.1"/>
    <property type="molecule type" value="Genomic_DNA"/>
</dbReference>
<dbReference type="RefSeq" id="WP_011489456.1">
    <property type="nucleotide sequence ID" value="NZ_CP008760.1"/>
</dbReference>
<dbReference type="SMR" id="Q13VF1"/>
<dbReference type="STRING" id="266265.Bxe_A1009"/>
<dbReference type="KEGG" id="bxb:DR64_3171"/>
<dbReference type="KEGG" id="bxe:Bxe_A1009"/>
<dbReference type="PATRIC" id="fig|266265.5.peg.3571"/>
<dbReference type="eggNOG" id="COG0335">
    <property type="taxonomic scope" value="Bacteria"/>
</dbReference>
<dbReference type="OrthoDB" id="9803541at2"/>
<dbReference type="Proteomes" id="UP000001817">
    <property type="component" value="Chromosome 1"/>
</dbReference>
<dbReference type="GO" id="GO:0022625">
    <property type="term" value="C:cytosolic large ribosomal subunit"/>
    <property type="evidence" value="ECO:0007669"/>
    <property type="project" value="TreeGrafter"/>
</dbReference>
<dbReference type="GO" id="GO:0003735">
    <property type="term" value="F:structural constituent of ribosome"/>
    <property type="evidence" value="ECO:0007669"/>
    <property type="project" value="InterPro"/>
</dbReference>
<dbReference type="GO" id="GO:0006412">
    <property type="term" value="P:translation"/>
    <property type="evidence" value="ECO:0007669"/>
    <property type="project" value="UniProtKB-UniRule"/>
</dbReference>
<dbReference type="FunFam" id="2.30.30.790:FF:000001">
    <property type="entry name" value="50S ribosomal protein L19"/>
    <property type="match status" value="1"/>
</dbReference>
<dbReference type="Gene3D" id="2.30.30.790">
    <property type="match status" value="1"/>
</dbReference>
<dbReference type="HAMAP" id="MF_00402">
    <property type="entry name" value="Ribosomal_bL19"/>
    <property type="match status" value="1"/>
</dbReference>
<dbReference type="InterPro" id="IPR001857">
    <property type="entry name" value="Ribosomal_bL19"/>
</dbReference>
<dbReference type="InterPro" id="IPR018257">
    <property type="entry name" value="Ribosomal_bL19_CS"/>
</dbReference>
<dbReference type="InterPro" id="IPR038657">
    <property type="entry name" value="Ribosomal_bL19_sf"/>
</dbReference>
<dbReference type="InterPro" id="IPR008991">
    <property type="entry name" value="Translation_prot_SH3-like_sf"/>
</dbReference>
<dbReference type="NCBIfam" id="TIGR01024">
    <property type="entry name" value="rplS_bact"/>
    <property type="match status" value="1"/>
</dbReference>
<dbReference type="PANTHER" id="PTHR15680:SF9">
    <property type="entry name" value="LARGE RIBOSOMAL SUBUNIT PROTEIN BL19M"/>
    <property type="match status" value="1"/>
</dbReference>
<dbReference type="PANTHER" id="PTHR15680">
    <property type="entry name" value="RIBOSOMAL PROTEIN L19"/>
    <property type="match status" value="1"/>
</dbReference>
<dbReference type="Pfam" id="PF01245">
    <property type="entry name" value="Ribosomal_L19"/>
    <property type="match status" value="1"/>
</dbReference>
<dbReference type="PIRSF" id="PIRSF002191">
    <property type="entry name" value="Ribosomal_L19"/>
    <property type="match status" value="1"/>
</dbReference>
<dbReference type="PRINTS" id="PR00061">
    <property type="entry name" value="RIBOSOMALL19"/>
</dbReference>
<dbReference type="SUPFAM" id="SSF50104">
    <property type="entry name" value="Translation proteins SH3-like domain"/>
    <property type="match status" value="1"/>
</dbReference>
<dbReference type="PROSITE" id="PS01015">
    <property type="entry name" value="RIBOSOMAL_L19"/>
    <property type="match status" value="1"/>
</dbReference>
<accession>Q13VF1</accession>
<comment type="function">
    <text evidence="1">This protein is located at the 30S-50S ribosomal subunit interface and may play a role in the structure and function of the aminoacyl-tRNA binding site.</text>
</comment>
<comment type="similarity">
    <text evidence="1">Belongs to the bacterial ribosomal protein bL19 family.</text>
</comment>
<sequence length="128" mass="14204">MNLIAKLEQEEIARALGEKTIPEFAPGDTVIVSVNVVEGTRKRVQAYEGVVIAKRNRGLNSSFIVRKISSGEGVERTFQTYSPLLASIVVKRRGDVRRAKLYYLRDRSGKSARIKEKLVSKGRAASQA</sequence>
<name>RL19_PARXL</name>
<proteinExistence type="inferred from homology"/>
<feature type="chain" id="PRO_0000252501" description="Large ribosomal subunit protein bL19">
    <location>
        <begin position="1"/>
        <end position="128"/>
    </location>
</feature>